<keyword id="KW-0408">Iron</keyword>
<keyword id="KW-1185">Reference proteome</keyword>
<comment type="function">
    <text evidence="2">Could be a mediator in iron transactions between iron acquisition and iron-requiring processes, such as synthesis and/or repair of Fe-S clusters in biosynthetic enzymes.</text>
</comment>
<comment type="subunit">
    <text evidence="2">Monomer.</text>
</comment>
<comment type="similarity">
    <text evidence="2">Belongs to the Fe(2+)-trafficking protein family.</text>
</comment>
<protein>
    <recommendedName>
        <fullName evidence="2">Probable Fe(2+)-trafficking protein</fullName>
    </recommendedName>
</protein>
<dbReference type="EMBL" id="AE005674">
    <property type="protein sequence ID" value="AAN44440.1"/>
    <property type="molecule type" value="Genomic_DNA"/>
</dbReference>
<dbReference type="EMBL" id="AE014073">
    <property type="protein sequence ID" value="AAP18264.1"/>
    <property type="molecule type" value="Genomic_DNA"/>
</dbReference>
<dbReference type="RefSeq" id="NP_708733.1">
    <property type="nucleotide sequence ID" value="NC_004337.2"/>
</dbReference>
<dbReference type="RefSeq" id="WP_000091700.1">
    <property type="nucleotide sequence ID" value="NZ_WPGW01000067.1"/>
</dbReference>
<dbReference type="SMR" id="P0A8P5"/>
<dbReference type="STRING" id="198214.SF2959"/>
<dbReference type="PaxDb" id="198214-SF2959"/>
<dbReference type="GeneID" id="1026548"/>
<dbReference type="KEGG" id="sfl:SF2959"/>
<dbReference type="KEGG" id="sfx:S3162"/>
<dbReference type="PATRIC" id="fig|198214.7.peg.3518"/>
<dbReference type="HOGENOM" id="CLU_170994_0_0_6"/>
<dbReference type="Proteomes" id="UP000001006">
    <property type="component" value="Chromosome"/>
</dbReference>
<dbReference type="Proteomes" id="UP000002673">
    <property type="component" value="Chromosome"/>
</dbReference>
<dbReference type="GO" id="GO:0005829">
    <property type="term" value="C:cytosol"/>
    <property type="evidence" value="ECO:0007669"/>
    <property type="project" value="TreeGrafter"/>
</dbReference>
<dbReference type="GO" id="GO:0005506">
    <property type="term" value="F:iron ion binding"/>
    <property type="evidence" value="ECO:0007669"/>
    <property type="project" value="UniProtKB-UniRule"/>
</dbReference>
<dbReference type="GO" id="GO:0034599">
    <property type="term" value="P:cellular response to oxidative stress"/>
    <property type="evidence" value="ECO:0007669"/>
    <property type="project" value="TreeGrafter"/>
</dbReference>
<dbReference type="FunFam" id="1.10.3880.10:FF:000001">
    <property type="entry name" value="Probable Fe(2+)-trafficking protein"/>
    <property type="match status" value="1"/>
</dbReference>
<dbReference type="Gene3D" id="1.10.3880.10">
    <property type="entry name" value="Fe(II) trafficking protein YggX"/>
    <property type="match status" value="1"/>
</dbReference>
<dbReference type="HAMAP" id="MF_00686">
    <property type="entry name" value="Fe_traffic_YggX"/>
    <property type="match status" value="1"/>
</dbReference>
<dbReference type="InterPro" id="IPR007457">
    <property type="entry name" value="Fe_traffick_prot_YggX"/>
</dbReference>
<dbReference type="InterPro" id="IPR036766">
    <property type="entry name" value="Fe_traffick_prot_YggX_sf"/>
</dbReference>
<dbReference type="NCBIfam" id="NF003817">
    <property type="entry name" value="PRK05408.1"/>
    <property type="match status" value="1"/>
</dbReference>
<dbReference type="PANTHER" id="PTHR36965">
    <property type="entry name" value="FE(2+)-TRAFFICKING PROTEIN-RELATED"/>
    <property type="match status" value="1"/>
</dbReference>
<dbReference type="PANTHER" id="PTHR36965:SF1">
    <property type="entry name" value="FE(2+)-TRAFFICKING PROTEIN-RELATED"/>
    <property type="match status" value="1"/>
</dbReference>
<dbReference type="Pfam" id="PF04362">
    <property type="entry name" value="Iron_traffic"/>
    <property type="match status" value="1"/>
</dbReference>
<dbReference type="PIRSF" id="PIRSF029827">
    <property type="entry name" value="Fe_traffic_YggX"/>
    <property type="match status" value="1"/>
</dbReference>
<dbReference type="SUPFAM" id="SSF111148">
    <property type="entry name" value="YggX-like"/>
    <property type="match status" value="1"/>
</dbReference>
<feature type="initiator methionine" description="Removed" evidence="1">
    <location>
        <position position="1"/>
    </location>
</feature>
<feature type="chain" id="PRO_0000214507" description="Probable Fe(2+)-trafficking protein">
    <location>
        <begin position="2"/>
        <end position="91"/>
    </location>
</feature>
<name>FETP_SHIFL</name>
<organism>
    <name type="scientific">Shigella flexneri</name>
    <dbReference type="NCBI Taxonomy" id="623"/>
    <lineage>
        <taxon>Bacteria</taxon>
        <taxon>Pseudomonadati</taxon>
        <taxon>Pseudomonadota</taxon>
        <taxon>Gammaproteobacteria</taxon>
        <taxon>Enterobacterales</taxon>
        <taxon>Enterobacteriaceae</taxon>
        <taxon>Shigella</taxon>
    </lineage>
</organism>
<proteinExistence type="inferred from homology"/>
<gene>
    <name evidence="2" type="primary">yggX</name>
    <name type="ordered locus">SF2959</name>
    <name type="ordered locus">S3162</name>
</gene>
<reference key="1">
    <citation type="journal article" date="2002" name="Nucleic Acids Res.">
        <title>Genome sequence of Shigella flexneri 2a: insights into pathogenicity through comparison with genomes of Escherichia coli K12 and O157.</title>
        <authorList>
            <person name="Jin Q."/>
            <person name="Yuan Z."/>
            <person name="Xu J."/>
            <person name="Wang Y."/>
            <person name="Shen Y."/>
            <person name="Lu W."/>
            <person name="Wang J."/>
            <person name="Liu H."/>
            <person name="Yang J."/>
            <person name="Yang F."/>
            <person name="Zhang X."/>
            <person name="Zhang J."/>
            <person name="Yang G."/>
            <person name="Wu H."/>
            <person name="Qu D."/>
            <person name="Dong J."/>
            <person name="Sun L."/>
            <person name="Xue Y."/>
            <person name="Zhao A."/>
            <person name="Gao Y."/>
            <person name="Zhu J."/>
            <person name="Kan B."/>
            <person name="Ding K."/>
            <person name="Chen S."/>
            <person name="Cheng H."/>
            <person name="Yao Z."/>
            <person name="He B."/>
            <person name="Chen R."/>
            <person name="Ma D."/>
            <person name="Qiang B."/>
            <person name="Wen Y."/>
            <person name="Hou Y."/>
            <person name="Yu J."/>
        </authorList>
    </citation>
    <scope>NUCLEOTIDE SEQUENCE [LARGE SCALE GENOMIC DNA]</scope>
    <source>
        <strain>301 / Serotype 2a</strain>
    </source>
</reference>
<reference key="2">
    <citation type="journal article" date="2003" name="Infect. Immun.">
        <title>Complete genome sequence and comparative genomics of Shigella flexneri serotype 2a strain 2457T.</title>
        <authorList>
            <person name="Wei J."/>
            <person name="Goldberg M.B."/>
            <person name="Burland V."/>
            <person name="Venkatesan M.M."/>
            <person name="Deng W."/>
            <person name="Fournier G."/>
            <person name="Mayhew G.F."/>
            <person name="Plunkett G. III"/>
            <person name="Rose D.J."/>
            <person name="Darling A."/>
            <person name="Mau B."/>
            <person name="Perna N.T."/>
            <person name="Payne S.M."/>
            <person name="Runyen-Janecky L.J."/>
            <person name="Zhou S."/>
            <person name="Schwartz D.C."/>
            <person name="Blattner F.R."/>
        </authorList>
    </citation>
    <scope>NUCLEOTIDE SEQUENCE [LARGE SCALE GENOMIC DNA]</scope>
    <source>
        <strain>ATCC 700930 / 2457T / Serotype 2a</strain>
    </source>
</reference>
<accession>P0A8P5</accession>
<accession>P52065</accession>
<evidence type="ECO:0000250" key="1"/>
<evidence type="ECO:0000255" key="2">
    <source>
        <dbReference type="HAMAP-Rule" id="MF_00686"/>
    </source>
</evidence>
<sequence length="91" mass="10953">MSRTIFCTFLQREAEGQDFQLYPGELGKRIYNEISKEAWAQWQHKQTMLINEKKLNMMNAEHRKLLEQEMVNFLFEGKEVHIEGYTPEDKK</sequence>